<evidence type="ECO:0000255" key="1"/>
<evidence type="ECO:0000269" key="2">
    <source>
    </source>
</evidence>
<evidence type="ECO:0000269" key="3">
    <source>
    </source>
</evidence>
<evidence type="ECO:0000269" key="4">
    <source>
    </source>
</evidence>
<evidence type="ECO:0000303" key="5">
    <source>
    </source>
</evidence>
<evidence type="ECO:0000305" key="6"/>
<evidence type="ECO:0000305" key="7">
    <source>
    </source>
</evidence>
<evidence type="ECO:0000305" key="8">
    <source>
    </source>
</evidence>
<evidence type="ECO:0000312" key="9">
    <source>
        <dbReference type="Araport" id="AT1G64350"/>
    </source>
</evidence>
<evidence type="ECO:0000312" key="10">
    <source>
        <dbReference type="EMBL" id="AAG51710.1"/>
    </source>
</evidence>
<evidence type="ECO:0000312" key="11">
    <source>
        <dbReference type="EMBL" id="AAL15222.1"/>
    </source>
</evidence>
<sequence>MAKSMATLDSGTTCSSWNQSGDRLAAGSLNGKLSIYESSTSSSSTFSCTSKVRVSESSIVKIVWLPSEYGDAVACVCEDGSLSIWEELSEDAHGLEWKLCKSMKNKSSQVLDVQFGVSRKSLKMVAAYSDGYLRVFELLNPLELKNWQLQAEFQNVIDSLSTLGKPSSLSASVSWNPMKGEEQEPSFVLAFNSDSPHLNSSKIWEFDEAHNRWLAVAELALPEDKGDPVYALSWAPNIGRPYEVVAVATHKGIGIWHVGLAPDLEGRLPVKKVSSLSGHQGEVWQMEWDMSGMTLASTGSDGMVKLWQSNLNGEWHEQATLEPVPS</sequence>
<feature type="chain" id="PRO_0000431094" description="Protein SEH1">
    <location>
        <begin position="1"/>
        <end position="326"/>
    </location>
</feature>
<feature type="repeat" description="WD 1" evidence="1">
    <location>
        <begin position="7"/>
        <end position="46"/>
    </location>
</feature>
<feature type="repeat" description="WD 2" evidence="1">
    <location>
        <begin position="54"/>
        <end position="95"/>
    </location>
</feature>
<feature type="repeat" description="WD 3" evidence="1">
    <location>
        <begin position="105"/>
        <end position="146"/>
    </location>
</feature>
<feature type="repeat" description="WD 4" evidence="1">
    <location>
        <begin position="224"/>
        <end position="266"/>
    </location>
</feature>
<feature type="repeat" description="WD 5" evidence="1">
    <location>
        <begin position="278"/>
        <end position="317"/>
    </location>
</feature>
<feature type="sequence conflict" description="In Ref. 5; AAM65032." ref="5">
    <original>E</original>
    <variation>V</variation>
    <location>
        <position position="68"/>
    </location>
</feature>
<feature type="sequence conflict" description="In Ref. 1; AAG59882." ref="1">
    <original>A</original>
    <variation>T</variation>
    <location>
        <position position="190"/>
    </location>
</feature>
<feature type="sequence conflict" description="In Ref. 1; AAG59882." ref="1">
    <original>I</original>
    <variation>N</variation>
    <location>
        <position position="203"/>
    </location>
</feature>
<comment type="function">
    <text evidence="3">Required for proper export of mRNAs from the nucleus to the cytoplasm.</text>
</comment>
<comment type="subunit">
    <text evidence="7">Part of the nuclear pore complex (NPC). The NPC has an eight-fold symmetrical structure comprising a central transport channel and two rings, the cytoplasmic and nuclear rings, to which eight filaments are attached. The cytoplasmic filaments have loose ends, while the nuclear filaments are joined in a distal ring, forming a nuclear basket. NPCs are highly dynamic in configuration and composition, and can be devided in 3 subcomplexes, the NUP62 subcomplex, the NUP107-160 subcomplex and the NUP93 subcomplex, containing approximately 30 different nucleoporin proteins.</text>
</comment>
<comment type="subcellular location">
    <subcellularLocation>
        <location evidence="2 4">Nucleus envelope</location>
    </subcellularLocation>
    <subcellularLocation>
        <location evidence="3 4">Nucleus</location>
    </subcellularLocation>
    <subcellularLocation>
        <location evidence="3 4">Cytoplasm</location>
    </subcellularLocation>
    <subcellularLocation>
        <location evidence="7">Nucleus</location>
        <location evidence="7">Nuclear pore complex</location>
    </subcellularLocation>
    <text evidence="8">Part of the cellular SEH1 pool is not permanently associated with the Nup107-160 complex.</text>
</comment>
<comment type="disruption phenotype">
    <text evidence="3">No visible phenotype, but enhanced susceptibility to virulent Pseudomonas bacteria and oomycete pathogens.</text>
</comment>
<comment type="similarity">
    <text evidence="6">Belongs to the WD repeat SEC13 family.</text>
</comment>
<comment type="sequence caution" evidence="6">
    <conflict type="erroneous gene model prediction">
        <sequence resource="EMBL-CDS" id="AAG51710"/>
    </conflict>
</comment>
<keyword id="KW-0963">Cytoplasm</keyword>
<keyword id="KW-0509">mRNA transport</keyword>
<keyword id="KW-0906">Nuclear pore complex</keyword>
<keyword id="KW-0539">Nucleus</keyword>
<keyword id="KW-0653">Protein transport</keyword>
<keyword id="KW-1185">Reference proteome</keyword>
<keyword id="KW-0677">Repeat</keyword>
<keyword id="KW-0811">Translocation</keyword>
<keyword id="KW-0813">Transport</keyword>
<keyword id="KW-0853">WD repeat</keyword>
<accession>Q93VR9</accession>
<accession>Q8LB12</accession>
<accession>Q9C5X7</accession>
<accession>Q9C7V9</accession>
<proteinExistence type="evidence at protein level"/>
<reference key="1">
    <citation type="submission" date="2001-01" db="EMBL/GenBank/DDBJ databases">
        <title>Arabidopsis thaliana seh1 homolog (seh1h) mRNA.</title>
        <authorList>
            <person name="Lee S.H."/>
            <person name="Jin J.B."/>
            <person name="Hwang I."/>
        </authorList>
    </citation>
    <scope>NUCLEOTIDE SEQUENCE [MRNA]</scope>
</reference>
<reference key="2">
    <citation type="journal article" date="2000" name="Nature">
        <title>Sequence and analysis of chromosome 1 of the plant Arabidopsis thaliana.</title>
        <authorList>
            <person name="Theologis A."/>
            <person name="Ecker J.R."/>
            <person name="Palm C.J."/>
            <person name="Federspiel N.A."/>
            <person name="Kaul S."/>
            <person name="White O."/>
            <person name="Alonso J."/>
            <person name="Altafi H."/>
            <person name="Araujo R."/>
            <person name="Bowman C.L."/>
            <person name="Brooks S.Y."/>
            <person name="Buehler E."/>
            <person name="Chan A."/>
            <person name="Chao Q."/>
            <person name="Chen H."/>
            <person name="Cheuk R.F."/>
            <person name="Chin C.W."/>
            <person name="Chung M.K."/>
            <person name="Conn L."/>
            <person name="Conway A.B."/>
            <person name="Conway A.R."/>
            <person name="Creasy T.H."/>
            <person name="Dewar K."/>
            <person name="Dunn P."/>
            <person name="Etgu P."/>
            <person name="Feldblyum T.V."/>
            <person name="Feng J.-D."/>
            <person name="Fong B."/>
            <person name="Fujii C.Y."/>
            <person name="Gill J.E."/>
            <person name="Goldsmith A.D."/>
            <person name="Haas B."/>
            <person name="Hansen N.F."/>
            <person name="Hughes B."/>
            <person name="Huizar L."/>
            <person name="Hunter J.L."/>
            <person name="Jenkins J."/>
            <person name="Johnson-Hopson C."/>
            <person name="Khan S."/>
            <person name="Khaykin E."/>
            <person name="Kim C.J."/>
            <person name="Koo H.L."/>
            <person name="Kremenetskaia I."/>
            <person name="Kurtz D.B."/>
            <person name="Kwan A."/>
            <person name="Lam B."/>
            <person name="Langin-Hooper S."/>
            <person name="Lee A."/>
            <person name="Lee J.M."/>
            <person name="Lenz C.A."/>
            <person name="Li J.H."/>
            <person name="Li Y.-P."/>
            <person name="Lin X."/>
            <person name="Liu S.X."/>
            <person name="Liu Z.A."/>
            <person name="Luros J.S."/>
            <person name="Maiti R."/>
            <person name="Marziali A."/>
            <person name="Militscher J."/>
            <person name="Miranda M."/>
            <person name="Nguyen M."/>
            <person name="Nierman W.C."/>
            <person name="Osborne B.I."/>
            <person name="Pai G."/>
            <person name="Peterson J."/>
            <person name="Pham P.K."/>
            <person name="Rizzo M."/>
            <person name="Rooney T."/>
            <person name="Rowley D."/>
            <person name="Sakano H."/>
            <person name="Salzberg S.L."/>
            <person name="Schwartz J.R."/>
            <person name="Shinn P."/>
            <person name="Southwick A.M."/>
            <person name="Sun H."/>
            <person name="Tallon L.J."/>
            <person name="Tambunga G."/>
            <person name="Toriumi M.J."/>
            <person name="Town C.D."/>
            <person name="Utterback T."/>
            <person name="Van Aken S."/>
            <person name="Vaysberg M."/>
            <person name="Vysotskaia V.S."/>
            <person name="Walker M."/>
            <person name="Wu D."/>
            <person name="Yu G."/>
            <person name="Fraser C.M."/>
            <person name="Venter J.C."/>
            <person name="Davis R.W."/>
        </authorList>
    </citation>
    <scope>NUCLEOTIDE SEQUENCE [LARGE SCALE GENOMIC DNA]</scope>
    <source>
        <strain>cv. Columbia</strain>
    </source>
</reference>
<reference key="3">
    <citation type="journal article" date="2017" name="Plant J.">
        <title>Araport11: a complete reannotation of the Arabidopsis thaliana reference genome.</title>
        <authorList>
            <person name="Cheng C.Y."/>
            <person name="Krishnakumar V."/>
            <person name="Chan A.P."/>
            <person name="Thibaud-Nissen F."/>
            <person name="Schobel S."/>
            <person name="Town C.D."/>
        </authorList>
    </citation>
    <scope>GENOME REANNOTATION</scope>
    <source>
        <strain>cv. Columbia</strain>
    </source>
</reference>
<reference key="4">
    <citation type="journal article" date="2003" name="Science">
        <title>Empirical analysis of transcriptional activity in the Arabidopsis genome.</title>
        <authorList>
            <person name="Yamada K."/>
            <person name="Lim J."/>
            <person name="Dale J.M."/>
            <person name="Chen H."/>
            <person name="Shinn P."/>
            <person name="Palm C.J."/>
            <person name="Southwick A.M."/>
            <person name="Wu H.C."/>
            <person name="Kim C.J."/>
            <person name="Nguyen M."/>
            <person name="Pham P.K."/>
            <person name="Cheuk R.F."/>
            <person name="Karlin-Newmann G."/>
            <person name="Liu S.X."/>
            <person name="Lam B."/>
            <person name="Sakano H."/>
            <person name="Wu T."/>
            <person name="Yu G."/>
            <person name="Miranda M."/>
            <person name="Quach H.L."/>
            <person name="Tripp M."/>
            <person name="Chang C.H."/>
            <person name="Lee J.M."/>
            <person name="Toriumi M.J."/>
            <person name="Chan M.M."/>
            <person name="Tang C.C."/>
            <person name="Onodera C.S."/>
            <person name="Deng J.M."/>
            <person name="Akiyama K."/>
            <person name="Ansari Y."/>
            <person name="Arakawa T."/>
            <person name="Banh J."/>
            <person name="Banno F."/>
            <person name="Bowser L."/>
            <person name="Brooks S.Y."/>
            <person name="Carninci P."/>
            <person name="Chao Q."/>
            <person name="Choy N."/>
            <person name="Enju A."/>
            <person name="Goldsmith A.D."/>
            <person name="Gurjal M."/>
            <person name="Hansen N.F."/>
            <person name="Hayashizaki Y."/>
            <person name="Johnson-Hopson C."/>
            <person name="Hsuan V.W."/>
            <person name="Iida K."/>
            <person name="Karnes M."/>
            <person name="Khan S."/>
            <person name="Koesema E."/>
            <person name="Ishida J."/>
            <person name="Jiang P.X."/>
            <person name="Jones T."/>
            <person name="Kawai J."/>
            <person name="Kamiya A."/>
            <person name="Meyers C."/>
            <person name="Nakajima M."/>
            <person name="Narusaka M."/>
            <person name="Seki M."/>
            <person name="Sakurai T."/>
            <person name="Satou M."/>
            <person name="Tamse R."/>
            <person name="Vaysberg M."/>
            <person name="Wallender E.K."/>
            <person name="Wong C."/>
            <person name="Yamamura Y."/>
            <person name="Yuan S."/>
            <person name="Shinozaki K."/>
            <person name="Davis R.W."/>
            <person name="Theologis A."/>
            <person name="Ecker J.R."/>
        </authorList>
    </citation>
    <scope>NUCLEOTIDE SEQUENCE [LARGE SCALE MRNA]</scope>
    <source>
        <strain>cv. Columbia</strain>
    </source>
</reference>
<reference key="5">
    <citation type="submission" date="2002-03" db="EMBL/GenBank/DDBJ databases">
        <title>Full-length cDNA from Arabidopsis thaliana.</title>
        <authorList>
            <person name="Brover V.V."/>
            <person name="Troukhan M.E."/>
            <person name="Alexandrov N.A."/>
            <person name="Lu Y.-P."/>
            <person name="Flavell R.B."/>
            <person name="Feldmann K.A."/>
        </authorList>
    </citation>
    <scope>NUCLEOTIDE SEQUENCE [LARGE SCALE MRNA]</scope>
</reference>
<reference key="6">
    <citation type="journal article" date="2010" name="Plant Cell">
        <title>Identification and characterization of nuclear pore complex components in Arabidopsis thaliana.</title>
        <authorList>
            <person name="Tamura K."/>
            <person name="Fukao Y."/>
            <person name="Iwamoto M."/>
            <person name="Haraguchi T."/>
            <person name="Hara-Nishimura I."/>
        </authorList>
    </citation>
    <scope>IDENTIFICATION IN THE NUCLEAR PORE COMPLEX BY MASS SPECTROMETRY</scope>
    <scope>SUBCELLULAR LOCATION</scope>
    <scope>NOMENCLATURE</scope>
</reference>
<reference key="7">
    <citation type="journal article" date="2012" name="Plant J.">
        <title>Putative members of the Arabidopsis Nup107-160 nuclear pore sub-complex contribute to pathogen defense.</title>
        <authorList>
            <person name="Wiermer M."/>
            <person name="Cheng Y.T."/>
            <person name="Imkampe J."/>
            <person name="Li M."/>
            <person name="Wang D."/>
            <person name="Lipka V."/>
            <person name="Li X."/>
        </authorList>
    </citation>
    <scope>FUNCTION</scope>
    <scope>DISRUPTION PHENOTYPE</scope>
    <scope>SUBCELLULAR LOCATION</scope>
</reference>
<reference key="8">
    <citation type="journal article" date="2012" name="Plant Signal. Behav.">
        <title>Nucleoporins Nup160 and Seh1 are required for disease resistance in Arabidopsis.</title>
        <authorList>
            <person name="Roth C."/>
            <person name="Wiermer M."/>
        </authorList>
    </citation>
    <scope>FUNCTION</scope>
    <scope>SUBCELLULAR LOCATION</scope>
</reference>
<organism evidence="11">
    <name type="scientific">Arabidopsis thaliana</name>
    <name type="common">Mouse-ear cress</name>
    <dbReference type="NCBI Taxonomy" id="3702"/>
    <lineage>
        <taxon>Eukaryota</taxon>
        <taxon>Viridiplantae</taxon>
        <taxon>Streptophyta</taxon>
        <taxon>Embryophyta</taxon>
        <taxon>Tracheophyta</taxon>
        <taxon>Spermatophyta</taxon>
        <taxon>Magnoliopsida</taxon>
        <taxon>eudicotyledons</taxon>
        <taxon>Gunneridae</taxon>
        <taxon>Pentapetalae</taxon>
        <taxon>rosids</taxon>
        <taxon>malvids</taxon>
        <taxon>Brassicales</taxon>
        <taxon>Brassicaceae</taxon>
        <taxon>Camelineae</taxon>
        <taxon>Arabidopsis</taxon>
    </lineage>
</organism>
<gene>
    <name evidence="5" type="primary">SEH1</name>
    <name type="synonym">SEH1H</name>
    <name evidence="9" type="ordered locus">At1g64350</name>
    <name evidence="10" type="ORF">F15H21.2</name>
</gene>
<dbReference type="EMBL" id="AF325901">
    <property type="protein sequence ID" value="AAG59882.1"/>
    <property type="molecule type" value="mRNA"/>
</dbReference>
<dbReference type="EMBL" id="AC066689">
    <property type="protein sequence ID" value="AAG51710.1"/>
    <property type="status" value="ALT_SEQ"/>
    <property type="molecule type" value="Genomic_DNA"/>
</dbReference>
<dbReference type="EMBL" id="CP002684">
    <property type="protein sequence ID" value="AEE34229.1"/>
    <property type="molecule type" value="Genomic_DNA"/>
</dbReference>
<dbReference type="EMBL" id="AF370222">
    <property type="protein sequence ID" value="AAK44037.1"/>
    <property type="molecule type" value="mRNA"/>
</dbReference>
<dbReference type="EMBL" id="AY059116">
    <property type="protein sequence ID" value="AAL15222.1"/>
    <property type="molecule type" value="mRNA"/>
</dbReference>
<dbReference type="EMBL" id="AY087489">
    <property type="protein sequence ID" value="AAM65032.1"/>
    <property type="molecule type" value="mRNA"/>
</dbReference>
<dbReference type="PIR" id="E96667">
    <property type="entry name" value="E96667"/>
</dbReference>
<dbReference type="RefSeq" id="NP_564830.1">
    <property type="nucleotide sequence ID" value="NM_105109.4"/>
</dbReference>
<dbReference type="SMR" id="Q93VR9"/>
<dbReference type="BioGRID" id="27962">
    <property type="interactions" value="4"/>
</dbReference>
<dbReference type="FunCoup" id="Q93VR9">
    <property type="interactions" value="3883"/>
</dbReference>
<dbReference type="STRING" id="3702.Q93VR9"/>
<dbReference type="PaxDb" id="3702-AT1G64350.1"/>
<dbReference type="ProteomicsDB" id="232671"/>
<dbReference type="EnsemblPlants" id="AT1G64350.1">
    <property type="protein sequence ID" value="AT1G64350.1"/>
    <property type="gene ID" value="AT1G64350"/>
</dbReference>
<dbReference type="GeneID" id="842741"/>
<dbReference type="Gramene" id="AT1G64350.1">
    <property type="protein sequence ID" value="AT1G64350.1"/>
    <property type="gene ID" value="AT1G64350"/>
</dbReference>
<dbReference type="KEGG" id="ath:AT1G64350"/>
<dbReference type="Araport" id="AT1G64350"/>
<dbReference type="TAIR" id="AT1G64350">
    <property type="gene designation" value="SEH1H"/>
</dbReference>
<dbReference type="eggNOG" id="KOG2445">
    <property type="taxonomic scope" value="Eukaryota"/>
</dbReference>
<dbReference type="HOGENOM" id="CLU_032441_1_2_1"/>
<dbReference type="InParanoid" id="Q93VR9"/>
<dbReference type="OMA" id="NAPTRRW"/>
<dbReference type="PhylomeDB" id="Q93VR9"/>
<dbReference type="PRO" id="PR:Q93VR9"/>
<dbReference type="Proteomes" id="UP000006548">
    <property type="component" value="Chromosome 1"/>
</dbReference>
<dbReference type="ExpressionAtlas" id="Q93VR9">
    <property type="expression patterns" value="baseline and differential"/>
</dbReference>
<dbReference type="GO" id="GO:0005737">
    <property type="term" value="C:cytoplasm"/>
    <property type="evidence" value="ECO:0007669"/>
    <property type="project" value="UniProtKB-SubCell"/>
</dbReference>
<dbReference type="GO" id="GO:0005635">
    <property type="term" value="C:nuclear envelope"/>
    <property type="evidence" value="ECO:0000314"/>
    <property type="project" value="TAIR"/>
</dbReference>
<dbReference type="GO" id="GO:0005643">
    <property type="term" value="C:nuclear pore"/>
    <property type="evidence" value="ECO:0007669"/>
    <property type="project" value="UniProtKB-SubCell"/>
</dbReference>
<dbReference type="GO" id="GO:0005198">
    <property type="term" value="F:structural molecule activity"/>
    <property type="evidence" value="ECO:0007669"/>
    <property type="project" value="InterPro"/>
</dbReference>
<dbReference type="GO" id="GO:0051028">
    <property type="term" value="P:mRNA transport"/>
    <property type="evidence" value="ECO:0007669"/>
    <property type="project" value="UniProtKB-KW"/>
</dbReference>
<dbReference type="GO" id="GO:0015031">
    <property type="term" value="P:protein transport"/>
    <property type="evidence" value="ECO:0007669"/>
    <property type="project" value="UniProtKB-KW"/>
</dbReference>
<dbReference type="FunFam" id="2.130.10.10:FF:000493">
    <property type="entry name" value="Nucleoporin SEH1"/>
    <property type="match status" value="1"/>
</dbReference>
<dbReference type="Gene3D" id="2.130.10.10">
    <property type="entry name" value="YVTN repeat-like/Quinoprotein amine dehydrogenase"/>
    <property type="match status" value="1"/>
</dbReference>
<dbReference type="InterPro" id="IPR037363">
    <property type="entry name" value="Sec13/Seh1_fam"/>
</dbReference>
<dbReference type="InterPro" id="IPR015943">
    <property type="entry name" value="WD40/YVTN_repeat-like_dom_sf"/>
</dbReference>
<dbReference type="InterPro" id="IPR036322">
    <property type="entry name" value="WD40_repeat_dom_sf"/>
</dbReference>
<dbReference type="InterPro" id="IPR001680">
    <property type="entry name" value="WD40_rpt"/>
</dbReference>
<dbReference type="PANTHER" id="PTHR11024">
    <property type="entry name" value="NUCLEAR PORE COMPLEX PROTEIN SEC13 / SEH1 FAMILY MEMBER"/>
    <property type="match status" value="1"/>
</dbReference>
<dbReference type="PANTHER" id="PTHR11024:SF3">
    <property type="entry name" value="NUCLEOPORIN SEH1"/>
    <property type="match status" value="1"/>
</dbReference>
<dbReference type="Pfam" id="PF00400">
    <property type="entry name" value="WD40"/>
    <property type="match status" value="1"/>
</dbReference>
<dbReference type="SMART" id="SM00320">
    <property type="entry name" value="WD40"/>
    <property type="match status" value="4"/>
</dbReference>
<dbReference type="SUPFAM" id="SSF50978">
    <property type="entry name" value="WD40 repeat-like"/>
    <property type="match status" value="1"/>
</dbReference>
<dbReference type="PROSITE" id="PS50082">
    <property type="entry name" value="WD_REPEATS_2"/>
    <property type="match status" value="1"/>
</dbReference>
<dbReference type="PROSITE" id="PS50294">
    <property type="entry name" value="WD_REPEATS_REGION"/>
    <property type="match status" value="1"/>
</dbReference>
<name>SEH1_ARATH</name>
<protein>
    <recommendedName>
        <fullName evidence="5">Protein SEH1</fullName>
    </recommendedName>
</protein>